<name>COAA_ENTH1</name>
<reference evidence="7" key="1">
    <citation type="submission" date="2012-06" db="EMBL/GenBank/DDBJ databases">
        <title>Short 5' UTR of Entamoeba genes.</title>
        <authorList>
            <person name="Hiranuka K."/>
            <person name="Kumagai M."/>
            <person name="Wakaguri H."/>
            <person name="Suzuki Y."/>
            <person name="Sugano S."/>
            <person name="Watanabe J."/>
            <person name="Makioka A."/>
        </authorList>
    </citation>
    <scope>NUCLEOTIDE SEQUENCE [MRNA]</scope>
    <source>
        <strain evidence="7">ATCC 30459 / HM-1:IMSS / ABRM</strain>
    </source>
</reference>
<reference evidence="8" key="2">
    <citation type="journal article" date="2005" name="Nature">
        <title>The genome of the protist parasite Entamoeba histolytica.</title>
        <authorList>
            <person name="Loftus B.J."/>
            <person name="Anderson I."/>
            <person name="Davies R."/>
            <person name="Alsmark U.C."/>
            <person name="Samuelson J."/>
            <person name="Amedeo P."/>
            <person name="Roncaglia P."/>
            <person name="Berriman M."/>
            <person name="Hirt R.P."/>
            <person name="Mann B.J."/>
            <person name="Nozaki T."/>
            <person name="Suh B."/>
            <person name="Pop M."/>
            <person name="Duchene M."/>
            <person name="Ackers J."/>
            <person name="Tannich E."/>
            <person name="Leippe M."/>
            <person name="Hofer M."/>
            <person name="Bruchhaus I."/>
            <person name="Willhoeft U."/>
            <person name="Bhattacharya A."/>
            <person name="Chillingworth T."/>
            <person name="Churcher C.M."/>
            <person name="Hance Z."/>
            <person name="Harris B."/>
            <person name="Harris D."/>
            <person name="Jagels K."/>
            <person name="Moule S."/>
            <person name="Mungall K.L."/>
            <person name="Ormond D."/>
            <person name="Squares R."/>
            <person name="Whitehead S."/>
            <person name="Quail M.A."/>
            <person name="Rabbinowitsch E."/>
            <person name="Norbertczak H."/>
            <person name="Price C."/>
            <person name="Wang Z."/>
            <person name="Guillen N."/>
            <person name="Gilchrist C."/>
            <person name="Stroup S.E."/>
            <person name="Bhattacharya S."/>
            <person name="Lohia A."/>
            <person name="Foster P.G."/>
            <person name="Sicheritz-Ponten T."/>
            <person name="Weber C."/>
            <person name="Singh U."/>
            <person name="Mukherjee C."/>
            <person name="El-Sayed N.M.A."/>
            <person name="Petri W.A."/>
            <person name="Clark C.G."/>
            <person name="Embley T.M."/>
            <person name="Barrell B.G."/>
            <person name="Fraser C.M."/>
            <person name="Hall N."/>
        </authorList>
    </citation>
    <scope>NUCLEOTIDE SEQUENCE [LARGE SCALE GENOMIC DNA]</scope>
    <source>
        <strain evidence="8">ATCC 30459 / HM-1:IMSS / ABRM</strain>
    </source>
</reference>
<reference evidence="6" key="3">
    <citation type="journal article" date="2019" name="PLoS Pathog.">
        <title>EhP3, a homolog of 14-3-3 family of protein participates in actin reorganization and phagocytosis in Entamoeba histolytica.</title>
        <authorList>
            <person name="Agarwal S."/>
            <person name="Anand G."/>
            <person name="Sharma S."/>
            <person name="Parimita Rath P."/>
            <person name="Gourinath S."/>
            <person name="Bhattacharya A."/>
        </authorList>
    </citation>
    <scope>INTERACTION WITH 14-3-3 PROTEIN 3</scope>
    <scope>SUBCELLULAR LOCATION</scope>
    <scope>DEVELOPMENTAL STAGE</scope>
    <scope>IDENTIFICATION BY MASS SPECTROMETRY</scope>
</reference>
<reference evidence="6" key="4">
    <citation type="journal article" date="2020" name="MBio">
        <title>Coactosin Phosphorylation Controls Entamoeba histolytica Cell Membrane Protrusions and Cell Motility.</title>
        <authorList>
            <person name="Hasan M.M."/>
            <person name="Teixeira J.E."/>
            <person name="Lam Y.W."/>
            <person name="Huston C.D."/>
        </authorList>
    </citation>
    <scope>DEVELOPMENTAL STAGE</scope>
    <scope>IDENTIFICATION BY MASS SPECTROMETRY</scope>
    <scope>PHOSPHORYLATION AT SER-147</scope>
</reference>
<reference evidence="9" key="5">
    <citation type="journal article" date="2014" name="PLoS Pathog.">
        <title>EhCoactosin stabilizes actin filaments in the protist parasite Entamoeba histolytica.</title>
        <authorList>
            <person name="Kumar N."/>
            <person name="Somlata X."/>
            <person name="Mazumder M."/>
            <person name="Dutta P."/>
            <person name="Maiti S."/>
            <person name="Gourinath S."/>
        </authorList>
    </citation>
    <scope>X-RAY CRYSTALLOGRAPHY (1.50 ANGSTROMS) OF 1-134</scope>
    <scope>FUNCTION</scope>
    <scope>INTERACTION WITH G-ACTIN AND F-ACTIN</scope>
    <scope>SUBCELLULAR LOCATION</scope>
    <scope>DEVELOPMENTAL STAGE</scope>
    <scope>MOTIF</scope>
    <scope>MUTAGENESIS OF 2-SER--SER-7; 71-ASP--ARG-76; LYS-75 AND 134-LYS--ASN-148</scope>
</reference>
<evidence type="ECO:0000255" key="1">
    <source>
        <dbReference type="PROSITE-ProRule" id="PRU00599"/>
    </source>
</evidence>
<evidence type="ECO:0000269" key="2">
    <source>
    </source>
</evidence>
<evidence type="ECO:0000269" key="3">
    <source>
    </source>
</evidence>
<evidence type="ECO:0000269" key="4">
    <source>
    </source>
</evidence>
<evidence type="ECO:0000303" key="5">
    <source>
    </source>
</evidence>
<evidence type="ECO:0000305" key="6"/>
<evidence type="ECO:0000312" key="7">
    <source>
        <dbReference type="EMBL" id="BAN37672.1"/>
    </source>
</evidence>
<evidence type="ECO:0000312" key="8">
    <source>
        <dbReference type="EMBL" id="EAL45540.1"/>
    </source>
</evidence>
<evidence type="ECO:0007744" key="9">
    <source>
        <dbReference type="PDB" id="4LIZ"/>
    </source>
</evidence>
<evidence type="ECO:0007829" key="10">
    <source>
        <dbReference type="PDB" id="4LIZ"/>
    </source>
</evidence>
<gene>
    <name evidence="8" type="ORF">EHI_168340</name>
</gene>
<proteinExistence type="evidence at protein level"/>
<accession>C4M4P4</accession>
<accession>A0A060N599</accession>
<accession>A0A175JSA9</accession>
<organism>
    <name type="scientific">Entamoeba histolytica (strain ATCC 30459 / HM-1:IMSS / ABRM)</name>
    <dbReference type="NCBI Taxonomy" id="294381"/>
    <lineage>
        <taxon>Eukaryota</taxon>
        <taxon>Amoebozoa</taxon>
        <taxon>Evosea</taxon>
        <taxon>Archamoebae</taxon>
        <taxon>Mastigamoebida</taxon>
        <taxon>Entamoebidae</taxon>
        <taxon>Entamoeba</taxon>
    </lineage>
</organism>
<keyword id="KW-0002">3D-structure</keyword>
<keyword id="KW-0009">Actin-binding</keyword>
<keyword id="KW-1003">Cell membrane</keyword>
<keyword id="KW-0966">Cell projection</keyword>
<keyword id="KW-0963">Cytoplasm</keyword>
<keyword id="KW-0206">Cytoskeleton</keyword>
<keyword id="KW-0472">Membrane</keyword>
<keyword id="KW-0597">Phosphoprotein</keyword>
<keyword id="KW-1185">Reference proteome</keyword>
<comment type="function">
    <text evidence="2">Actin-binding protein which is involved in F-actin stabilization (PubMed:25210743). May play a role during phagocytosis and pseudopod formation by contributing to the maintenance of F-actin (PubMed:25210743).</text>
</comment>
<comment type="subunit">
    <text evidence="3">Interacts with 14-3-3 protein 3.</text>
</comment>
<comment type="subcellular location">
    <subcellularLocation>
        <location evidence="3">Cytoplasm</location>
    </subcellularLocation>
    <subcellularLocation>
        <location evidence="3">Cell projection</location>
        <location evidence="3">Phagocytic cup</location>
    </subcellularLocation>
    <subcellularLocation>
        <location evidence="2">Cell projection</location>
        <location evidence="2">Pseudopodium</location>
    </subcellularLocation>
    <subcellularLocation>
        <location evidence="2">Cell membrane</location>
        <topology evidence="6">Peripheral membrane protein</topology>
    </subcellularLocation>
    <subcellularLocation>
        <location evidence="2">Cytoplasm</location>
        <location evidence="2">Cytoskeleton</location>
    </subcellularLocation>
    <text evidence="2 3">During phagocytosis, recruited to the phagocytic cup by 14-3-3 protein 3 (PubMed:31095644). Co-localizes with F-actin in pseudopods and in phagocytic cups. Localizes to the site of phagocytosis until scission of the cups occurs (PubMed:25210743).</text>
</comment>
<comment type="developmental stage">
    <text evidence="2 3 4">Expressed in trophozoites (at protein level).</text>
</comment>
<comment type="PTM">
    <text evidence="4">Phosphorylation at Ser-147 appears not to affect its binding to actin; however, it may regulate phagocytosis and motility.</text>
</comment>
<comment type="similarity">
    <text evidence="6">Belongs to the actin-binding proteins ADF family. Coactosin subfamily.</text>
</comment>
<protein>
    <recommendedName>
        <fullName evidence="5">Coactosin</fullName>
    </recommendedName>
</protein>
<feature type="chain" id="PRO_0000457481" description="Coactosin">
    <location>
        <begin position="1"/>
        <end position="148"/>
    </location>
</feature>
<feature type="domain" description="ADF-H" evidence="1">
    <location>
        <begin position="1"/>
        <end position="134"/>
    </location>
</feature>
<feature type="short sequence motif" description="F-loop; important for stable binding to G-actin and F-actin" evidence="4">
    <location>
        <begin position="71"/>
        <end position="76"/>
    </location>
</feature>
<feature type="modified residue" description="Phosphoserine" evidence="4">
    <location>
        <position position="147"/>
    </location>
</feature>
<feature type="mutagenesis site" description="No effect on binding to F-actin or G-actin. No effect on F-actin stabilization." evidence="2">
    <location>
        <begin position="2"/>
        <end position="7"/>
    </location>
</feature>
<feature type="mutagenesis site" description="No effect on binding to F-actin. Impairs binding to G-actin. Reduces F-actin stabilization." evidence="2">
    <location>
        <begin position="71"/>
        <end position="76"/>
    </location>
</feature>
<feature type="mutagenesis site" description="No effect on binding to F-actin. No effect on F-actin stabilization." evidence="2">
    <original>K</original>
    <variation>A</variation>
    <location>
        <position position="75"/>
    </location>
</feature>
<feature type="mutagenesis site" description="No effect on binding to F-actin or G-actin. No effect on F-actin stabilization." evidence="2">
    <location>
        <begin position="134"/>
        <end position="148"/>
    </location>
</feature>
<feature type="turn" evidence="10">
    <location>
        <begin position="7"/>
        <end position="9"/>
    </location>
</feature>
<feature type="helix" evidence="10">
    <location>
        <begin position="10"/>
        <end position="17"/>
    </location>
</feature>
<feature type="strand" evidence="10">
    <location>
        <begin position="25"/>
        <end position="32"/>
    </location>
</feature>
<feature type="turn" evidence="10">
    <location>
        <begin position="33"/>
        <end position="36"/>
    </location>
</feature>
<feature type="strand" evidence="10">
    <location>
        <begin position="37"/>
        <end position="45"/>
    </location>
</feature>
<feature type="helix" evidence="10">
    <location>
        <begin position="48"/>
        <end position="54"/>
    </location>
</feature>
<feature type="strand" evidence="10">
    <location>
        <begin position="60"/>
        <end position="69"/>
    </location>
</feature>
<feature type="strand" evidence="10">
    <location>
        <begin position="71"/>
        <end position="74"/>
    </location>
</feature>
<feature type="strand" evidence="10">
    <location>
        <begin position="76"/>
        <end position="85"/>
    </location>
</feature>
<feature type="helix" evidence="10">
    <location>
        <begin position="92"/>
        <end position="108"/>
    </location>
</feature>
<feature type="strand" evidence="10">
    <location>
        <begin position="113"/>
        <end position="120"/>
    </location>
</feature>
<feature type="helix" evidence="10">
    <location>
        <begin position="121"/>
        <end position="123"/>
    </location>
</feature>
<feature type="helix" evidence="10">
    <location>
        <begin position="126"/>
        <end position="134"/>
    </location>
</feature>
<dbReference type="EMBL" id="AK418941">
    <property type="protein sequence ID" value="BAN37672.1"/>
    <property type="molecule type" value="mRNA"/>
</dbReference>
<dbReference type="EMBL" id="DS571263">
    <property type="protein sequence ID" value="EAL45540.1"/>
    <property type="molecule type" value="Genomic_DNA"/>
</dbReference>
<dbReference type="RefSeq" id="XP_650926.1">
    <property type="nucleotide sequence ID" value="XM_645834.2"/>
</dbReference>
<dbReference type="PDB" id="4LIZ">
    <property type="method" value="X-ray"/>
    <property type="resolution" value="1.50 A"/>
    <property type="chains" value="A=1-134"/>
</dbReference>
<dbReference type="PDBsum" id="4LIZ"/>
<dbReference type="SMR" id="C4M4P4"/>
<dbReference type="FunCoup" id="C4M4P4">
    <property type="interactions" value="39"/>
</dbReference>
<dbReference type="STRING" id="5759.C4M4P4"/>
<dbReference type="iPTMnet" id="C4M4P4"/>
<dbReference type="EnsemblProtists" id="GAT96365">
    <property type="protein sequence ID" value="GAT96365"/>
    <property type="gene ID" value="CL6EHI_168340"/>
</dbReference>
<dbReference type="EnsemblProtists" id="rna_EHI_168340-1">
    <property type="protein sequence ID" value="rna_EHI_168340-1"/>
    <property type="gene ID" value="EHI_168340"/>
</dbReference>
<dbReference type="GeneID" id="3405224"/>
<dbReference type="KEGG" id="ehi:EHI_168340"/>
<dbReference type="VEuPathDB" id="AmoebaDB:EHI5A_015010"/>
<dbReference type="VEuPathDB" id="AmoebaDB:EHI7A_006660"/>
<dbReference type="VEuPathDB" id="AmoebaDB:EHI8A_004520"/>
<dbReference type="VEuPathDB" id="AmoebaDB:EHI_168340"/>
<dbReference type="VEuPathDB" id="AmoebaDB:KM1_015870"/>
<dbReference type="eggNOG" id="KOG3655">
    <property type="taxonomic scope" value="Eukaryota"/>
</dbReference>
<dbReference type="HOGENOM" id="CLU_129657_0_0_1"/>
<dbReference type="InParanoid" id="C4M4P4"/>
<dbReference type="OMA" id="WIGPNCK"/>
<dbReference type="OrthoDB" id="20822at2759"/>
<dbReference type="EvolutionaryTrace" id="C4M4P4"/>
<dbReference type="Proteomes" id="UP000001926">
    <property type="component" value="Partially assembled WGS sequence"/>
</dbReference>
<dbReference type="GO" id="GO:0030864">
    <property type="term" value="C:cortical actin cytoskeleton"/>
    <property type="evidence" value="ECO:0000318"/>
    <property type="project" value="GO_Central"/>
</dbReference>
<dbReference type="GO" id="GO:0005737">
    <property type="term" value="C:cytoplasm"/>
    <property type="evidence" value="ECO:0000314"/>
    <property type="project" value="UniProtKB"/>
</dbReference>
<dbReference type="GO" id="GO:0031234">
    <property type="term" value="C:extrinsic component of cytoplasmic side of plasma membrane"/>
    <property type="evidence" value="ECO:0000314"/>
    <property type="project" value="UniProtKB"/>
</dbReference>
<dbReference type="GO" id="GO:0001891">
    <property type="term" value="C:phagocytic cup"/>
    <property type="evidence" value="ECO:0000314"/>
    <property type="project" value="UniProtKB"/>
</dbReference>
<dbReference type="GO" id="GO:0031143">
    <property type="term" value="C:pseudopodium"/>
    <property type="evidence" value="ECO:0000314"/>
    <property type="project" value="UniProtKB"/>
</dbReference>
<dbReference type="GO" id="GO:0030427">
    <property type="term" value="C:site of polarized growth"/>
    <property type="evidence" value="ECO:0000318"/>
    <property type="project" value="GO_Central"/>
</dbReference>
<dbReference type="GO" id="GO:0051015">
    <property type="term" value="F:actin filament binding"/>
    <property type="evidence" value="ECO:0000314"/>
    <property type="project" value="UniProtKB"/>
</dbReference>
<dbReference type="GO" id="GO:0030833">
    <property type="term" value="P:regulation of actin filament polymerization"/>
    <property type="evidence" value="ECO:0000314"/>
    <property type="project" value="UniProtKB"/>
</dbReference>
<dbReference type="CDD" id="cd11282">
    <property type="entry name" value="ADF_coactosin_like"/>
    <property type="match status" value="1"/>
</dbReference>
<dbReference type="FunFam" id="3.40.20.10:FF:000018">
    <property type="entry name" value="Coactosin-like 1"/>
    <property type="match status" value="1"/>
</dbReference>
<dbReference type="Gene3D" id="3.40.20.10">
    <property type="entry name" value="Severin"/>
    <property type="match status" value="1"/>
</dbReference>
<dbReference type="InterPro" id="IPR002108">
    <property type="entry name" value="ADF-H"/>
</dbReference>
<dbReference type="InterPro" id="IPR029006">
    <property type="entry name" value="ADF-H/Gelsolin-like_dom_sf"/>
</dbReference>
<dbReference type="PANTHER" id="PTHR10829">
    <property type="entry name" value="CORTACTIN AND DREBRIN"/>
    <property type="match status" value="1"/>
</dbReference>
<dbReference type="PANTHER" id="PTHR10829:SF25">
    <property type="entry name" value="DREBRIN-LIKE PROTEIN"/>
    <property type="match status" value="1"/>
</dbReference>
<dbReference type="Pfam" id="PF00241">
    <property type="entry name" value="Cofilin_ADF"/>
    <property type="match status" value="1"/>
</dbReference>
<dbReference type="SMART" id="SM00102">
    <property type="entry name" value="ADF"/>
    <property type="match status" value="1"/>
</dbReference>
<dbReference type="SUPFAM" id="SSF55753">
    <property type="entry name" value="Actin depolymerizing proteins"/>
    <property type="match status" value="1"/>
</dbReference>
<dbReference type="PROSITE" id="PS51263">
    <property type="entry name" value="ADF_H"/>
    <property type="match status" value="1"/>
</dbReference>
<sequence>MSGFDLSEVAGPVAEVIDDKNEEVEFVVFGVQTQPNKLVVDAKGKGGLEEVKAALKEDALQFAYYRTISGDEESKRVKFVFISWAGEGIKKPKLRAVMSILKGDVKNVINNFHIELHATSLDDLVEDEIAAKIKKAGGADYSFNTTSN</sequence>